<evidence type="ECO:0000255" key="1">
    <source>
        <dbReference type="HAMAP-Rule" id="MF_01026"/>
    </source>
</evidence>
<accession>A1KU80</accession>
<feature type="chain" id="PRO_1000063575" description="3-isopropylmalate dehydratase large subunit">
    <location>
        <begin position="1"/>
        <end position="469"/>
    </location>
</feature>
<feature type="binding site" evidence="1">
    <location>
        <position position="349"/>
    </location>
    <ligand>
        <name>[4Fe-4S] cluster</name>
        <dbReference type="ChEBI" id="CHEBI:49883"/>
    </ligand>
</feature>
<feature type="binding site" evidence="1">
    <location>
        <position position="410"/>
    </location>
    <ligand>
        <name>[4Fe-4S] cluster</name>
        <dbReference type="ChEBI" id="CHEBI:49883"/>
    </ligand>
</feature>
<feature type="binding site" evidence="1">
    <location>
        <position position="413"/>
    </location>
    <ligand>
        <name>[4Fe-4S] cluster</name>
        <dbReference type="ChEBI" id="CHEBI:49883"/>
    </ligand>
</feature>
<comment type="function">
    <text evidence="1">Catalyzes the isomerization between 2-isopropylmalate and 3-isopropylmalate, via the formation of 2-isopropylmaleate.</text>
</comment>
<comment type="catalytic activity">
    <reaction evidence="1">
        <text>(2R,3S)-3-isopropylmalate = (2S)-2-isopropylmalate</text>
        <dbReference type="Rhea" id="RHEA:32287"/>
        <dbReference type="ChEBI" id="CHEBI:1178"/>
        <dbReference type="ChEBI" id="CHEBI:35121"/>
        <dbReference type="EC" id="4.2.1.33"/>
    </reaction>
</comment>
<comment type="cofactor">
    <cofactor evidence="1">
        <name>[4Fe-4S] cluster</name>
        <dbReference type="ChEBI" id="CHEBI:49883"/>
    </cofactor>
    <text evidence="1">Binds 1 [4Fe-4S] cluster per subunit.</text>
</comment>
<comment type="pathway">
    <text evidence="1">Amino-acid biosynthesis; L-leucine biosynthesis; L-leucine from 3-methyl-2-oxobutanoate: step 2/4.</text>
</comment>
<comment type="subunit">
    <text evidence="1">Heterodimer of LeuC and LeuD.</text>
</comment>
<comment type="similarity">
    <text evidence="1">Belongs to the aconitase/IPM isomerase family. LeuC type 1 subfamily.</text>
</comment>
<protein>
    <recommendedName>
        <fullName evidence="1">3-isopropylmalate dehydratase large subunit</fullName>
        <ecNumber evidence="1">4.2.1.33</ecNumber>
    </recommendedName>
    <alternativeName>
        <fullName evidence="1">Alpha-IPM isomerase</fullName>
        <shortName evidence="1">IPMI</shortName>
    </alternativeName>
    <alternativeName>
        <fullName evidence="1">Isopropylmalate isomerase</fullName>
    </alternativeName>
</protein>
<name>LEUC_NEIMF</name>
<proteinExistence type="inferred from homology"/>
<sequence>MTAQTLYDKLWNSHVVREEEDGTVLLYIDRHLVHEVTSPQAFEGLKMAGRKLWRIDSVVSTADHNTPTGDWDKGIQDPISKLQVDTLDKNIKEFGALAYFPFMDKGQGIVHVMGPEQGATLPGMTVVCGDSHTSTHGAFGALAHGIGTSEVEHTMATQCITAKKSKSMLIAVDGKLKAGVTAKDVALYIIGQIGTAGGTGYAVEFGGEAIRSLSMEGRMTLCNMAIEAGARSGMVAVDQTTIDYVKDKPFAPEGEAWDKAVEYWRTLVSDEGAVFDKEYRFNAEDIEPQVTWGTSPEMVLDISSKVPNPAEETDPVKRSGMERALEYMGLEAGTPLNEIPVDIVFIGSCTNSRIEDLREAAAIAKDRKKAANVQRVLIVPGSGLVKEQAEKEGLDKIFIEAGFEWREPGCSMCLAMNADRLTPGQRCASTSNRNFEGRQGNGGRTHLVSPAMAAAAAVTGRFTDIRMMA</sequence>
<reference key="1">
    <citation type="journal article" date="2007" name="PLoS Genet.">
        <title>Meningococcal genetic variation mechanisms viewed through comparative analysis of serogroup C strain FAM18.</title>
        <authorList>
            <person name="Bentley S.D."/>
            <person name="Vernikos G.S."/>
            <person name="Snyder L.A.S."/>
            <person name="Churcher C."/>
            <person name="Arrowsmith C."/>
            <person name="Chillingworth T."/>
            <person name="Cronin A."/>
            <person name="Davis P.H."/>
            <person name="Holroyd N.E."/>
            <person name="Jagels K."/>
            <person name="Maddison M."/>
            <person name="Moule S."/>
            <person name="Rabbinowitsch E."/>
            <person name="Sharp S."/>
            <person name="Unwin L."/>
            <person name="Whitehead S."/>
            <person name="Quail M.A."/>
            <person name="Achtman M."/>
            <person name="Barrell B.G."/>
            <person name="Saunders N.J."/>
            <person name="Parkhill J."/>
        </authorList>
    </citation>
    <scope>NUCLEOTIDE SEQUENCE [LARGE SCALE GENOMIC DNA]</scope>
    <source>
        <strain>ATCC 700532 / DSM 15464 / FAM18</strain>
    </source>
</reference>
<keyword id="KW-0004">4Fe-4S</keyword>
<keyword id="KW-0028">Amino-acid biosynthesis</keyword>
<keyword id="KW-0100">Branched-chain amino acid biosynthesis</keyword>
<keyword id="KW-0408">Iron</keyword>
<keyword id="KW-0411">Iron-sulfur</keyword>
<keyword id="KW-0432">Leucine biosynthesis</keyword>
<keyword id="KW-0456">Lyase</keyword>
<keyword id="KW-0479">Metal-binding</keyword>
<gene>
    <name evidence="1" type="primary">leuC</name>
    <name type="ordered locus">NMC1176</name>
</gene>
<dbReference type="EC" id="4.2.1.33" evidence="1"/>
<dbReference type="EMBL" id="AM421808">
    <property type="protein sequence ID" value="CAM10422.1"/>
    <property type="molecule type" value="Genomic_DNA"/>
</dbReference>
<dbReference type="RefSeq" id="WP_002213443.1">
    <property type="nucleotide sequence ID" value="NC_008767.1"/>
</dbReference>
<dbReference type="SMR" id="A1KU80"/>
<dbReference type="GeneID" id="93385955"/>
<dbReference type="KEGG" id="nmc:NMC1176"/>
<dbReference type="HOGENOM" id="CLU_006714_3_4_4"/>
<dbReference type="UniPathway" id="UPA00048">
    <property type="reaction ID" value="UER00071"/>
</dbReference>
<dbReference type="Proteomes" id="UP000002286">
    <property type="component" value="Chromosome"/>
</dbReference>
<dbReference type="GO" id="GO:0003861">
    <property type="term" value="F:3-isopropylmalate dehydratase activity"/>
    <property type="evidence" value="ECO:0007669"/>
    <property type="project" value="UniProtKB-UniRule"/>
</dbReference>
<dbReference type="GO" id="GO:0051539">
    <property type="term" value="F:4 iron, 4 sulfur cluster binding"/>
    <property type="evidence" value="ECO:0007669"/>
    <property type="project" value="UniProtKB-KW"/>
</dbReference>
<dbReference type="GO" id="GO:0046872">
    <property type="term" value="F:metal ion binding"/>
    <property type="evidence" value="ECO:0007669"/>
    <property type="project" value="UniProtKB-KW"/>
</dbReference>
<dbReference type="GO" id="GO:0009098">
    <property type="term" value="P:L-leucine biosynthetic process"/>
    <property type="evidence" value="ECO:0007669"/>
    <property type="project" value="UniProtKB-UniRule"/>
</dbReference>
<dbReference type="CDD" id="cd01583">
    <property type="entry name" value="IPMI"/>
    <property type="match status" value="1"/>
</dbReference>
<dbReference type="FunFam" id="3.30.499.10:FF:000007">
    <property type="entry name" value="3-isopropylmalate dehydratase large subunit"/>
    <property type="match status" value="1"/>
</dbReference>
<dbReference type="Gene3D" id="3.30.499.10">
    <property type="entry name" value="Aconitase, domain 3"/>
    <property type="match status" value="2"/>
</dbReference>
<dbReference type="HAMAP" id="MF_01026">
    <property type="entry name" value="LeuC_type1"/>
    <property type="match status" value="1"/>
</dbReference>
<dbReference type="InterPro" id="IPR004430">
    <property type="entry name" value="3-IsopropMal_deHydase_lsu"/>
</dbReference>
<dbReference type="InterPro" id="IPR015931">
    <property type="entry name" value="Acnase/IPM_dHydase_lsu_aba_1/3"/>
</dbReference>
<dbReference type="InterPro" id="IPR001030">
    <property type="entry name" value="Acoase/IPM_deHydtase_lsu_aba"/>
</dbReference>
<dbReference type="InterPro" id="IPR018136">
    <property type="entry name" value="Aconitase_4Fe-4S_BS"/>
</dbReference>
<dbReference type="InterPro" id="IPR036008">
    <property type="entry name" value="Aconitase_4Fe-4S_dom"/>
</dbReference>
<dbReference type="InterPro" id="IPR050067">
    <property type="entry name" value="IPM_dehydratase_rel_enz"/>
</dbReference>
<dbReference type="InterPro" id="IPR033941">
    <property type="entry name" value="IPMI_cat"/>
</dbReference>
<dbReference type="NCBIfam" id="TIGR00170">
    <property type="entry name" value="leuC"/>
    <property type="match status" value="1"/>
</dbReference>
<dbReference type="NCBIfam" id="NF004016">
    <property type="entry name" value="PRK05478.1"/>
    <property type="match status" value="1"/>
</dbReference>
<dbReference type="NCBIfam" id="NF009116">
    <property type="entry name" value="PRK12466.1"/>
    <property type="match status" value="1"/>
</dbReference>
<dbReference type="PANTHER" id="PTHR43822:SF9">
    <property type="entry name" value="3-ISOPROPYLMALATE DEHYDRATASE"/>
    <property type="match status" value="1"/>
</dbReference>
<dbReference type="PANTHER" id="PTHR43822">
    <property type="entry name" value="HOMOACONITASE, MITOCHONDRIAL-RELATED"/>
    <property type="match status" value="1"/>
</dbReference>
<dbReference type="Pfam" id="PF00330">
    <property type="entry name" value="Aconitase"/>
    <property type="match status" value="1"/>
</dbReference>
<dbReference type="PRINTS" id="PR00415">
    <property type="entry name" value="ACONITASE"/>
</dbReference>
<dbReference type="SUPFAM" id="SSF53732">
    <property type="entry name" value="Aconitase iron-sulfur domain"/>
    <property type="match status" value="1"/>
</dbReference>
<dbReference type="PROSITE" id="PS00450">
    <property type="entry name" value="ACONITASE_1"/>
    <property type="match status" value="1"/>
</dbReference>
<dbReference type="PROSITE" id="PS01244">
    <property type="entry name" value="ACONITASE_2"/>
    <property type="match status" value="1"/>
</dbReference>
<organism>
    <name type="scientific">Neisseria meningitidis serogroup C / serotype 2a (strain ATCC 700532 / DSM 15464 / FAM18)</name>
    <dbReference type="NCBI Taxonomy" id="272831"/>
    <lineage>
        <taxon>Bacteria</taxon>
        <taxon>Pseudomonadati</taxon>
        <taxon>Pseudomonadota</taxon>
        <taxon>Betaproteobacteria</taxon>
        <taxon>Neisseriales</taxon>
        <taxon>Neisseriaceae</taxon>
        <taxon>Neisseria</taxon>
    </lineage>
</organism>